<evidence type="ECO:0000255" key="1">
    <source>
        <dbReference type="HAMAP-Rule" id="MF_00423"/>
    </source>
</evidence>
<feature type="chain" id="PRO_1000050372" description="L-seryl-tRNA(Sec) selenium transferase">
    <location>
        <begin position="1"/>
        <end position="470"/>
    </location>
</feature>
<feature type="modified residue" description="N6-(pyridoxal phosphate)lysine" evidence="1">
    <location>
        <position position="292"/>
    </location>
</feature>
<name>SELA_MOOTA</name>
<dbReference type="EC" id="2.9.1.1" evidence="1"/>
<dbReference type="EMBL" id="CP000232">
    <property type="protein sequence ID" value="ABC20786.1"/>
    <property type="molecule type" value="Genomic_DNA"/>
</dbReference>
<dbReference type="RefSeq" id="YP_431329.1">
    <property type="nucleotide sequence ID" value="NC_007644.1"/>
</dbReference>
<dbReference type="SMR" id="Q2RFK3"/>
<dbReference type="STRING" id="264732.Moth_2504"/>
<dbReference type="EnsemblBacteria" id="ABC20786">
    <property type="protein sequence ID" value="ABC20786"/>
    <property type="gene ID" value="Moth_2504"/>
</dbReference>
<dbReference type="KEGG" id="mta:Moth_2504"/>
<dbReference type="PATRIC" id="fig|264732.11.peg.2725"/>
<dbReference type="eggNOG" id="COG1921">
    <property type="taxonomic scope" value="Bacteria"/>
</dbReference>
<dbReference type="HOGENOM" id="CLU_038142_1_0_9"/>
<dbReference type="OrthoDB" id="9787096at2"/>
<dbReference type="UniPathway" id="UPA00906">
    <property type="reaction ID" value="UER00896"/>
</dbReference>
<dbReference type="GO" id="GO:0005737">
    <property type="term" value="C:cytoplasm"/>
    <property type="evidence" value="ECO:0007669"/>
    <property type="project" value="UniProtKB-SubCell"/>
</dbReference>
<dbReference type="GO" id="GO:0004125">
    <property type="term" value="F:L-seryl-tRNA(Sec) selenium transferase activity"/>
    <property type="evidence" value="ECO:0007669"/>
    <property type="project" value="UniProtKB-UniRule"/>
</dbReference>
<dbReference type="GO" id="GO:0001717">
    <property type="term" value="P:conversion of seryl-tRNAsec to selenocys-tRNAsec"/>
    <property type="evidence" value="ECO:0007669"/>
    <property type="project" value="UniProtKB-UniRule"/>
</dbReference>
<dbReference type="GO" id="GO:0001514">
    <property type="term" value="P:selenocysteine incorporation"/>
    <property type="evidence" value="ECO:0007669"/>
    <property type="project" value="UniProtKB-UniRule"/>
</dbReference>
<dbReference type="Gene3D" id="3.90.1150.180">
    <property type="match status" value="1"/>
</dbReference>
<dbReference type="Gene3D" id="3.40.640.10">
    <property type="entry name" value="Type I PLP-dependent aspartate aminotransferase-like (Major domain)"/>
    <property type="match status" value="1"/>
</dbReference>
<dbReference type="HAMAP" id="MF_00423">
    <property type="entry name" value="SelA"/>
    <property type="match status" value="1"/>
</dbReference>
<dbReference type="InterPro" id="IPR015424">
    <property type="entry name" value="PyrdxlP-dep_Trfase"/>
</dbReference>
<dbReference type="InterPro" id="IPR015421">
    <property type="entry name" value="PyrdxlP-dep_Trfase_major"/>
</dbReference>
<dbReference type="InterPro" id="IPR018319">
    <property type="entry name" value="SelA-like"/>
</dbReference>
<dbReference type="InterPro" id="IPR004534">
    <property type="entry name" value="SelA_trans"/>
</dbReference>
<dbReference type="InterPro" id="IPR025862">
    <property type="entry name" value="SelA_trans_N_dom"/>
</dbReference>
<dbReference type="NCBIfam" id="TIGR00474">
    <property type="entry name" value="selA"/>
    <property type="match status" value="1"/>
</dbReference>
<dbReference type="PANTHER" id="PTHR32328">
    <property type="entry name" value="L-SERYL-TRNA(SEC) SELENIUM TRANSFERASE"/>
    <property type="match status" value="1"/>
</dbReference>
<dbReference type="PANTHER" id="PTHR32328:SF0">
    <property type="entry name" value="L-SERYL-TRNA(SEC) SELENIUM TRANSFERASE"/>
    <property type="match status" value="1"/>
</dbReference>
<dbReference type="Pfam" id="PF12390">
    <property type="entry name" value="Se-cys_synth_N"/>
    <property type="match status" value="1"/>
</dbReference>
<dbReference type="Pfam" id="PF03841">
    <property type="entry name" value="SelA"/>
    <property type="match status" value="1"/>
</dbReference>
<dbReference type="SUPFAM" id="SSF53383">
    <property type="entry name" value="PLP-dependent transferases"/>
    <property type="match status" value="1"/>
</dbReference>
<protein>
    <recommendedName>
        <fullName evidence="1">L-seryl-tRNA(Sec) selenium transferase</fullName>
        <ecNumber evidence="1">2.9.1.1</ecNumber>
    </recommendedName>
    <alternativeName>
        <fullName evidence="1">Selenocysteine synthase</fullName>
        <shortName evidence="1">Sec synthase</shortName>
    </alternativeName>
    <alternativeName>
        <fullName evidence="1">Selenocysteinyl-tRNA(Sec) synthase</fullName>
    </alternativeName>
</protein>
<comment type="function">
    <text evidence="1">Converts seryl-tRNA(Sec) to selenocysteinyl-tRNA(Sec) required for selenoprotein biosynthesis.</text>
</comment>
<comment type="catalytic activity">
    <reaction evidence="1">
        <text>L-seryl-tRNA(Sec) + selenophosphate + H(+) = L-selenocysteinyl-tRNA(Sec) + phosphate</text>
        <dbReference type="Rhea" id="RHEA:22728"/>
        <dbReference type="Rhea" id="RHEA-COMP:9742"/>
        <dbReference type="Rhea" id="RHEA-COMP:9743"/>
        <dbReference type="ChEBI" id="CHEBI:15378"/>
        <dbReference type="ChEBI" id="CHEBI:16144"/>
        <dbReference type="ChEBI" id="CHEBI:43474"/>
        <dbReference type="ChEBI" id="CHEBI:78533"/>
        <dbReference type="ChEBI" id="CHEBI:78573"/>
        <dbReference type="EC" id="2.9.1.1"/>
    </reaction>
</comment>
<comment type="cofactor">
    <cofactor evidence="1">
        <name>pyridoxal 5'-phosphate</name>
        <dbReference type="ChEBI" id="CHEBI:597326"/>
    </cofactor>
</comment>
<comment type="pathway">
    <text evidence="1">Aminoacyl-tRNA biosynthesis; selenocysteinyl-tRNA(Sec) biosynthesis; selenocysteinyl-tRNA(Sec) from L-seryl-tRNA(Sec) (bacterial route): step 1/1.</text>
</comment>
<comment type="subcellular location">
    <subcellularLocation>
        <location evidence="1">Cytoplasm</location>
    </subcellularLocation>
</comment>
<comment type="similarity">
    <text evidence="1">Belongs to the SelA family.</text>
</comment>
<keyword id="KW-0963">Cytoplasm</keyword>
<keyword id="KW-0648">Protein biosynthesis</keyword>
<keyword id="KW-0663">Pyridoxal phosphate</keyword>
<keyword id="KW-0711">Selenium</keyword>
<keyword id="KW-0808">Transferase</keyword>
<proteinExistence type="inferred from homology"/>
<sequence>MESRNLLRQLPAVDQLLQHPRLKDLSRENYKMVLALTRQVLDDWRLKIKNGATTIPDPGQLAREIENRYHEAGRSSLRPVINATGVVLHTNLGRAILSPAARAAALTAAGRYTNLEYDLEKGQRGNRYSHVTGLLKELTGAEEALVVNNNAAAVLLALSTLAAGRETIISRGQLVEIGGSFRIPEVMGQSGTRLVEVGTTNKTYIHDYERAVGPDTALLLKVHPSNYRIQGFTREVTTAELVELGRRVGVPVMEDLGSGFLIDLEAYGITGEPTVQAEINQGVDVVTFSGDKLLGGPQAGIIVGRRDLVAAMAGHPLTRALRIDKMNLAALEATLRAYRNPDRAVKEIPTLAALVALPEDLRLRAEELQKLLTSVLGSRARVGLMPTTSQAGGGSLPVTELPSWAITIRPEQGGAAGLVTALRRTDPPVLARVQDDLLLLDVRTLLPGEGEELARALVQALEGAVHGGES</sequence>
<reference key="1">
    <citation type="journal article" date="2008" name="Environ. Microbiol.">
        <title>The complete genome sequence of Moorella thermoacetica (f. Clostridium thermoaceticum).</title>
        <authorList>
            <person name="Pierce E."/>
            <person name="Xie G."/>
            <person name="Barabote R.D."/>
            <person name="Saunders E."/>
            <person name="Han C.S."/>
            <person name="Detter J.C."/>
            <person name="Richardson P."/>
            <person name="Brettin T.S."/>
            <person name="Das A."/>
            <person name="Ljungdahl L.G."/>
            <person name="Ragsdale S.W."/>
        </authorList>
    </citation>
    <scope>NUCLEOTIDE SEQUENCE [LARGE SCALE GENOMIC DNA]</scope>
    <source>
        <strain>ATCC 39073 / JCM 9320</strain>
    </source>
</reference>
<organism>
    <name type="scientific">Moorella thermoacetica (strain ATCC 39073 / JCM 9320)</name>
    <dbReference type="NCBI Taxonomy" id="264732"/>
    <lineage>
        <taxon>Bacteria</taxon>
        <taxon>Bacillati</taxon>
        <taxon>Bacillota</taxon>
        <taxon>Clostridia</taxon>
        <taxon>Moorellales</taxon>
        <taxon>Moorellaceae</taxon>
        <taxon>Moorella</taxon>
    </lineage>
</organism>
<gene>
    <name evidence="1" type="primary">selA</name>
    <name type="ordered locus">Moth_2504</name>
</gene>
<accession>Q2RFK3</accession>